<organism>
    <name type="scientific">Kineococcus radiotolerans (strain ATCC BAA-149 / DSM 14245 / SRS30216)</name>
    <dbReference type="NCBI Taxonomy" id="266940"/>
    <lineage>
        <taxon>Bacteria</taxon>
        <taxon>Bacillati</taxon>
        <taxon>Actinomycetota</taxon>
        <taxon>Actinomycetes</taxon>
        <taxon>Kineosporiales</taxon>
        <taxon>Kineosporiaceae</taxon>
        <taxon>Kineococcus</taxon>
    </lineage>
</organism>
<reference key="1">
    <citation type="journal article" date="2008" name="PLoS ONE">
        <title>Survival in nuclear waste, extreme resistance, and potential applications gleaned from the genome sequence of Kineococcus radiotolerans SRS30216.</title>
        <authorList>
            <person name="Bagwell C.E."/>
            <person name="Bhat S."/>
            <person name="Hawkins G.M."/>
            <person name="Smith B.W."/>
            <person name="Biswas T."/>
            <person name="Hoover T.R."/>
            <person name="Saunders E."/>
            <person name="Han C.S."/>
            <person name="Tsodikov O.V."/>
            <person name="Shimkets L.J."/>
        </authorList>
    </citation>
    <scope>NUCLEOTIDE SEQUENCE [LARGE SCALE GENOMIC DNA]</scope>
    <source>
        <strain>ATCC BAA-149 / DSM 14245 / SRS30216</strain>
    </source>
</reference>
<sequence>MTGPTGAAVDGVARLGRVHLLGIGGVGMSGIARLLRGRGVEVSGTDAAPSPTLDRLRELGIRTRVGHDPAHLGDLGAGDTLVVSSAVRATNPELLAARERGVRVLHRSEALAALMAGRAGVAVAGTHGKTTTSSMLAVALTAAGLDPSYAIGGELTGGDDGGARDGSGPFVAEADESDGSFRAYAPVVDVVTNVEPDHLDHYGTAEAFAAAFEEFVDRLQPGGLLVACADDPGSAALAGHARGRGVRVRTYGASATADVRLRDLQPGAAASAVLVDGGVPRELRLAVPGEHNVLNAAAAYCAAVELGADPVAVLEGLARFGGARRRFELKGEAAGVRVVDDYAHHPTEVEALLRAARPVAGGGRVVVVFQPHLVSRTRAFAAEFGRALALADEVVVLDVYVAREDPDPEVTGALVADAVPLPAGRVRFLPDRSAAAGTLAATVRAGDLLLTVGAGDVTTVGPEVLNLLAER</sequence>
<dbReference type="EC" id="6.3.2.8" evidence="1"/>
<dbReference type="EMBL" id="CP000750">
    <property type="protein sequence ID" value="ABS04662.1"/>
    <property type="molecule type" value="Genomic_DNA"/>
</dbReference>
<dbReference type="RefSeq" id="WP_012087085.1">
    <property type="nucleotide sequence ID" value="NC_009664.2"/>
</dbReference>
<dbReference type="SMR" id="A6WCX3"/>
<dbReference type="STRING" id="266940.Krad_3198"/>
<dbReference type="KEGG" id="kra:Krad_3198"/>
<dbReference type="eggNOG" id="COG0773">
    <property type="taxonomic scope" value="Bacteria"/>
</dbReference>
<dbReference type="HOGENOM" id="CLU_028104_2_1_11"/>
<dbReference type="OrthoDB" id="9804126at2"/>
<dbReference type="UniPathway" id="UPA00219"/>
<dbReference type="Proteomes" id="UP000001116">
    <property type="component" value="Chromosome"/>
</dbReference>
<dbReference type="GO" id="GO:0005737">
    <property type="term" value="C:cytoplasm"/>
    <property type="evidence" value="ECO:0007669"/>
    <property type="project" value="UniProtKB-SubCell"/>
</dbReference>
<dbReference type="GO" id="GO:0005524">
    <property type="term" value="F:ATP binding"/>
    <property type="evidence" value="ECO:0007669"/>
    <property type="project" value="UniProtKB-UniRule"/>
</dbReference>
<dbReference type="GO" id="GO:0008763">
    <property type="term" value="F:UDP-N-acetylmuramate-L-alanine ligase activity"/>
    <property type="evidence" value="ECO:0007669"/>
    <property type="project" value="UniProtKB-UniRule"/>
</dbReference>
<dbReference type="GO" id="GO:0051301">
    <property type="term" value="P:cell division"/>
    <property type="evidence" value="ECO:0007669"/>
    <property type="project" value="UniProtKB-KW"/>
</dbReference>
<dbReference type="GO" id="GO:0071555">
    <property type="term" value="P:cell wall organization"/>
    <property type="evidence" value="ECO:0007669"/>
    <property type="project" value="UniProtKB-KW"/>
</dbReference>
<dbReference type="GO" id="GO:0009252">
    <property type="term" value="P:peptidoglycan biosynthetic process"/>
    <property type="evidence" value="ECO:0007669"/>
    <property type="project" value="UniProtKB-UniRule"/>
</dbReference>
<dbReference type="GO" id="GO:0008360">
    <property type="term" value="P:regulation of cell shape"/>
    <property type="evidence" value="ECO:0007669"/>
    <property type="project" value="UniProtKB-KW"/>
</dbReference>
<dbReference type="Gene3D" id="3.90.190.20">
    <property type="entry name" value="Mur ligase, C-terminal domain"/>
    <property type="match status" value="1"/>
</dbReference>
<dbReference type="Gene3D" id="3.40.1190.10">
    <property type="entry name" value="Mur-like, catalytic domain"/>
    <property type="match status" value="1"/>
</dbReference>
<dbReference type="Gene3D" id="3.40.50.720">
    <property type="entry name" value="NAD(P)-binding Rossmann-like Domain"/>
    <property type="match status" value="1"/>
</dbReference>
<dbReference type="HAMAP" id="MF_00046">
    <property type="entry name" value="MurC"/>
    <property type="match status" value="1"/>
</dbReference>
<dbReference type="InterPro" id="IPR036565">
    <property type="entry name" value="Mur-like_cat_sf"/>
</dbReference>
<dbReference type="InterPro" id="IPR004101">
    <property type="entry name" value="Mur_ligase_C"/>
</dbReference>
<dbReference type="InterPro" id="IPR036615">
    <property type="entry name" value="Mur_ligase_C_dom_sf"/>
</dbReference>
<dbReference type="InterPro" id="IPR013221">
    <property type="entry name" value="Mur_ligase_cen"/>
</dbReference>
<dbReference type="InterPro" id="IPR000713">
    <property type="entry name" value="Mur_ligase_N"/>
</dbReference>
<dbReference type="InterPro" id="IPR050061">
    <property type="entry name" value="MurCDEF_pg_biosynth"/>
</dbReference>
<dbReference type="InterPro" id="IPR005758">
    <property type="entry name" value="UDP-N-AcMur_Ala_ligase_MurC"/>
</dbReference>
<dbReference type="NCBIfam" id="TIGR01082">
    <property type="entry name" value="murC"/>
    <property type="match status" value="1"/>
</dbReference>
<dbReference type="PANTHER" id="PTHR43445:SF3">
    <property type="entry name" value="UDP-N-ACETYLMURAMATE--L-ALANINE LIGASE"/>
    <property type="match status" value="1"/>
</dbReference>
<dbReference type="PANTHER" id="PTHR43445">
    <property type="entry name" value="UDP-N-ACETYLMURAMATE--L-ALANINE LIGASE-RELATED"/>
    <property type="match status" value="1"/>
</dbReference>
<dbReference type="Pfam" id="PF01225">
    <property type="entry name" value="Mur_ligase"/>
    <property type="match status" value="1"/>
</dbReference>
<dbReference type="Pfam" id="PF02875">
    <property type="entry name" value="Mur_ligase_C"/>
    <property type="match status" value="1"/>
</dbReference>
<dbReference type="Pfam" id="PF08245">
    <property type="entry name" value="Mur_ligase_M"/>
    <property type="match status" value="1"/>
</dbReference>
<dbReference type="SUPFAM" id="SSF51984">
    <property type="entry name" value="MurCD N-terminal domain"/>
    <property type="match status" value="1"/>
</dbReference>
<dbReference type="SUPFAM" id="SSF53623">
    <property type="entry name" value="MurD-like peptide ligases, catalytic domain"/>
    <property type="match status" value="1"/>
</dbReference>
<dbReference type="SUPFAM" id="SSF53244">
    <property type="entry name" value="MurD-like peptide ligases, peptide-binding domain"/>
    <property type="match status" value="1"/>
</dbReference>
<evidence type="ECO:0000255" key="1">
    <source>
        <dbReference type="HAMAP-Rule" id="MF_00046"/>
    </source>
</evidence>
<gene>
    <name evidence="1" type="primary">murC</name>
    <name type="ordered locus">Krad_3198</name>
</gene>
<keyword id="KW-0067">ATP-binding</keyword>
<keyword id="KW-0131">Cell cycle</keyword>
<keyword id="KW-0132">Cell division</keyword>
<keyword id="KW-0133">Cell shape</keyword>
<keyword id="KW-0961">Cell wall biogenesis/degradation</keyword>
<keyword id="KW-0963">Cytoplasm</keyword>
<keyword id="KW-0436">Ligase</keyword>
<keyword id="KW-0547">Nucleotide-binding</keyword>
<keyword id="KW-0573">Peptidoglycan synthesis</keyword>
<keyword id="KW-1185">Reference proteome</keyword>
<comment type="function">
    <text evidence="1">Cell wall formation.</text>
</comment>
<comment type="catalytic activity">
    <reaction evidence="1">
        <text>UDP-N-acetyl-alpha-D-muramate + L-alanine + ATP = UDP-N-acetyl-alpha-D-muramoyl-L-alanine + ADP + phosphate + H(+)</text>
        <dbReference type="Rhea" id="RHEA:23372"/>
        <dbReference type="ChEBI" id="CHEBI:15378"/>
        <dbReference type="ChEBI" id="CHEBI:30616"/>
        <dbReference type="ChEBI" id="CHEBI:43474"/>
        <dbReference type="ChEBI" id="CHEBI:57972"/>
        <dbReference type="ChEBI" id="CHEBI:70757"/>
        <dbReference type="ChEBI" id="CHEBI:83898"/>
        <dbReference type="ChEBI" id="CHEBI:456216"/>
        <dbReference type="EC" id="6.3.2.8"/>
    </reaction>
</comment>
<comment type="pathway">
    <text evidence="1">Cell wall biogenesis; peptidoglycan biosynthesis.</text>
</comment>
<comment type="subcellular location">
    <subcellularLocation>
        <location evidence="1">Cytoplasm</location>
    </subcellularLocation>
</comment>
<comment type="similarity">
    <text evidence="1">Belongs to the MurCDEF family.</text>
</comment>
<feature type="chain" id="PRO_1000074745" description="UDP-N-acetylmuramate--L-alanine ligase">
    <location>
        <begin position="1"/>
        <end position="471"/>
    </location>
</feature>
<feature type="binding site" evidence="1">
    <location>
        <begin position="125"/>
        <end position="131"/>
    </location>
    <ligand>
        <name>ATP</name>
        <dbReference type="ChEBI" id="CHEBI:30616"/>
    </ligand>
</feature>
<name>MURC_KINRD</name>
<proteinExistence type="inferred from homology"/>
<protein>
    <recommendedName>
        <fullName evidence="1">UDP-N-acetylmuramate--L-alanine ligase</fullName>
        <ecNumber evidence="1">6.3.2.8</ecNumber>
    </recommendedName>
    <alternativeName>
        <fullName evidence="1">UDP-N-acetylmuramoyl-L-alanine synthetase</fullName>
    </alternativeName>
</protein>
<accession>A6WCX3</accession>